<sequence length="113" mass="12918">MAGYRKLGRPTDQRKAMLRNLVTSFLKHGKIETTETRAKETRSIAEKMITLAKRGDLHARRQVLSFVTEETVVQRLFEEIAPKYAERNGGYTRIYKVGPRRGDGAEVVILELV</sequence>
<comment type="subunit">
    <text evidence="1">Part of the 50S ribosomal subunit. Contacts protein L32.</text>
</comment>
<comment type="similarity">
    <text evidence="1">Belongs to the bacterial ribosomal protein bL17 family.</text>
</comment>
<protein>
    <recommendedName>
        <fullName evidence="1">Large ribosomal subunit protein bL17</fullName>
    </recommendedName>
    <alternativeName>
        <fullName evidence="2">50S ribosomal protein L17</fullName>
    </alternativeName>
</protein>
<organism>
    <name type="scientific">Clostridium botulinum (strain Okra / Type B1)</name>
    <dbReference type="NCBI Taxonomy" id="498213"/>
    <lineage>
        <taxon>Bacteria</taxon>
        <taxon>Bacillati</taxon>
        <taxon>Bacillota</taxon>
        <taxon>Clostridia</taxon>
        <taxon>Eubacteriales</taxon>
        <taxon>Clostridiaceae</taxon>
        <taxon>Clostridium</taxon>
    </lineage>
</organism>
<reference key="1">
    <citation type="journal article" date="2007" name="PLoS ONE">
        <title>Analysis of the neurotoxin complex genes in Clostridium botulinum A1-A4 and B1 strains: BoNT/A3, /Ba4 and /B1 clusters are located within plasmids.</title>
        <authorList>
            <person name="Smith T.J."/>
            <person name="Hill K.K."/>
            <person name="Foley B.T."/>
            <person name="Detter J.C."/>
            <person name="Munk A.C."/>
            <person name="Bruce D.C."/>
            <person name="Doggett N.A."/>
            <person name="Smith L.A."/>
            <person name="Marks J.D."/>
            <person name="Xie G."/>
            <person name="Brettin T.S."/>
        </authorList>
    </citation>
    <scope>NUCLEOTIDE SEQUENCE [LARGE SCALE GENOMIC DNA]</scope>
    <source>
        <strain>Okra / Type B1</strain>
    </source>
</reference>
<evidence type="ECO:0000255" key="1">
    <source>
        <dbReference type="HAMAP-Rule" id="MF_01368"/>
    </source>
</evidence>
<evidence type="ECO:0000305" key="2"/>
<keyword id="KW-0687">Ribonucleoprotein</keyword>
<keyword id="KW-0689">Ribosomal protein</keyword>
<gene>
    <name evidence="1" type="primary">rplQ</name>
    <name type="ordered locus">CLD_1054</name>
</gene>
<proteinExistence type="inferred from homology"/>
<name>RL17_CLOBK</name>
<feature type="chain" id="PRO_1000144402" description="Large ribosomal subunit protein bL17">
    <location>
        <begin position="1"/>
        <end position="113"/>
    </location>
</feature>
<dbReference type="EMBL" id="CP000939">
    <property type="protein sequence ID" value="ACA46744.1"/>
    <property type="molecule type" value="Genomic_DNA"/>
</dbReference>
<dbReference type="RefSeq" id="WP_003357477.1">
    <property type="nucleotide sequence ID" value="NC_010516.1"/>
</dbReference>
<dbReference type="SMR" id="B1IGC4"/>
<dbReference type="GeneID" id="5187110"/>
<dbReference type="KEGG" id="cbb:CLD_1054"/>
<dbReference type="HOGENOM" id="CLU_074407_2_2_9"/>
<dbReference type="Proteomes" id="UP000008541">
    <property type="component" value="Chromosome"/>
</dbReference>
<dbReference type="GO" id="GO:0022625">
    <property type="term" value="C:cytosolic large ribosomal subunit"/>
    <property type="evidence" value="ECO:0007669"/>
    <property type="project" value="TreeGrafter"/>
</dbReference>
<dbReference type="GO" id="GO:0003735">
    <property type="term" value="F:structural constituent of ribosome"/>
    <property type="evidence" value="ECO:0007669"/>
    <property type="project" value="InterPro"/>
</dbReference>
<dbReference type="GO" id="GO:0006412">
    <property type="term" value="P:translation"/>
    <property type="evidence" value="ECO:0007669"/>
    <property type="project" value="UniProtKB-UniRule"/>
</dbReference>
<dbReference type="FunFam" id="3.90.1030.10:FF:000002">
    <property type="entry name" value="50S ribosomal protein L17"/>
    <property type="match status" value="1"/>
</dbReference>
<dbReference type="Gene3D" id="3.90.1030.10">
    <property type="entry name" value="Ribosomal protein L17"/>
    <property type="match status" value="1"/>
</dbReference>
<dbReference type="HAMAP" id="MF_01368">
    <property type="entry name" value="Ribosomal_bL17"/>
    <property type="match status" value="1"/>
</dbReference>
<dbReference type="InterPro" id="IPR000456">
    <property type="entry name" value="Ribosomal_bL17"/>
</dbReference>
<dbReference type="InterPro" id="IPR047859">
    <property type="entry name" value="Ribosomal_bL17_CS"/>
</dbReference>
<dbReference type="InterPro" id="IPR036373">
    <property type="entry name" value="Ribosomal_bL17_sf"/>
</dbReference>
<dbReference type="NCBIfam" id="TIGR00059">
    <property type="entry name" value="L17"/>
    <property type="match status" value="1"/>
</dbReference>
<dbReference type="PANTHER" id="PTHR14413:SF16">
    <property type="entry name" value="LARGE RIBOSOMAL SUBUNIT PROTEIN BL17M"/>
    <property type="match status" value="1"/>
</dbReference>
<dbReference type="PANTHER" id="PTHR14413">
    <property type="entry name" value="RIBOSOMAL PROTEIN L17"/>
    <property type="match status" value="1"/>
</dbReference>
<dbReference type="Pfam" id="PF01196">
    <property type="entry name" value="Ribosomal_L17"/>
    <property type="match status" value="1"/>
</dbReference>
<dbReference type="SUPFAM" id="SSF64263">
    <property type="entry name" value="Prokaryotic ribosomal protein L17"/>
    <property type="match status" value="1"/>
</dbReference>
<dbReference type="PROSITE" id="PS01167">
    <property type="entry name" value="RIBOSOMAL_L17"/>
    <property type="match status" value="1"/>
</dbReference>
<accession>B1IGC4</accession>